<name>PUR5_GLOVI</name>
<proteinExistence type="inferred from homology"/>
<keyword id="KW-0067">ATP-binding</keyword>
<keyword id="KW-0963">Cytoplasm</keyword>
<keyword id="KW-0436">Ligase</keyword>
<keyword id="KW-0547">Nucleotide-binding</keyword>
<keyword id="KW-0658">Purine biosynthesis</keyword>
<keyword id="KW-1185">Reference proteome</keyword>
<organism>
    <name type="scientific">Gloeobacter violaceus (strain ATCC 29082 / PCC 7421)</name>
    <dbReference type="NCBI Taxonomy" id="251221"/>
    <lineage>
        <taxon>Bacteria</taxon>
        <taxon>Bacillati</taxon>
        <taxon>Cyanobacteriota</taxon>
        <taxon>Cyanophyceae</taxon>
        <taxon>Gloeobacterales</taxon>
        <taxon>Gloeobacteraceae</taxon>
        <taxon>Gloeobacter</taxon>
    </lineage>
</organism>
<accession>Q7NMP5</accession>
<reference key="1">
    <citation type="journal article" date="2003" name="DNA Res.">
        <title>Complete genome structure of Gloeobacter violaceus PCC 7421, a cyanobacterium that lacks thylakoids.</title>
        <authorList>
            <person name="Nakamura Y."/>
            <person name="Kaneko T."/>
            <person name="Sato S."/>
            <person name="Mimuro M."/>
            <person name="Miyashita H."/>
            <person name="Tsuchiya T."/>
            <person name="Sasamoto S."/>
            <person name="Watanabe A."/>
            <person name="Kawashima K."/>
            <person name="Kishida Y."/>
            <person name="Kiyokawa C."/>
            <person name="Kohara M."/>
            <person name="Matsumoto M."/>
            <person name="Matsuno A."/>
            <person name="Nakazaki N."/>
            <person name="Shimpo S."/>
            <person name="Takeuchi C."/>
            <person name="Yamada M."/>
            <person name="Tabata S."/>
        </authorList>
    </citation>
    <scope>NUCLEOTIDE SEQUENCE [LARGE SCALE GENOMIC DNA]</scope>
    <source>
        <strain>ATCC 29082 / PCC 7421</strain>
    </source>
</reference>
<evidence type="ECO:0000255" key="1">
    <source>
        <dbReference type="HAMAP-Rule" id="MF_00741"/>
    </source>
</evidence>
<gene>
    <name evidence="1" type="primary">purM</name>
    <name type="ordered locus">gll0720</name>
</gene>
<comment type="catalytic activity">
    <reaction evidence="1">
        <text>2-formamido-N(1)-(5-O-phospho-beta-D-ribosyl)acetamidine + ATP = 5-amino-1-(5-phospho-beta-D-ribosyl)imidazole + ADP + phosphate + H(+)</text>
        <dbReference type="Rhea" id="RHEA:23032"/>
        <dbReference type="ChEBI" id="CHEBI:15378"/>
        <dbReference type="ChEBI" id="CHEBI:30616"/>
        <dbReference type="ChEBI" id="CHEBI:43474"/>
        <dbReference type="ChEBI" id="CHEBI:137981"/>
        <dbReference type="ChEBI" id="CHEBI:147287"/>
        <dbReference type="ChEBI" id="CHEBI:456216"/>
        <dbReference type="EC" id="6.3.3.1"/>
    </reaction>
</comment>
<comment type="pathway">
    <text evidence="1">Purine metabolism; IMP biosynthesis via de novo pathway; 5-amino-1-(5-phospho-D-ribosyl)imidazole from N(2)-formyl-N(1)-(5-phospho-D-ribosyl)glycinamide: step 2/2.</text>
</comment>
<comment type="subcellular location">
    <subcellularLocation>
        <location evidence="1">Cytoplasm</location>
    </subcellularLocation>
</comment>
<comment type="similarity">
    <text evidence="1">Belongs to the AIR synthase family.</text>
</comment>
<dbReference type="EC" id="6.3.3.1" evidence="1"/>
<dbReference type="EMBL" id="BA000045">
    <property type="protein sequence ID" value="BAC88661.1"/>
    <property type="molecule type" value="Genomic_DNA"/>
</dbReference>
<dbReference type="RefSeq" id="NP_923666.1">
    <property type="nucleotide sequence ID" value="NC_005125.1"/>
</dbReference>
<dbReference type="RefSeq" id="WP_011140722.1">
    <property type="nucleotide sequence ID" value="NC_005125.1"/>
</dbReference>
<dbReference type="SMR" id="Q7NMP5"/>
<dbReference type="FunCoup" id="Q7NMP5">
    <property type="interactions" value="192"/>
</dbReference>
<dbReference type="STRING" id="251221.gene:10758196"/>
<dbReference type="EnsemblBacteria" id="BAC88661">
    <property type="protein sequence ID" value="BAC88661"/>
    <property type="gene ID" value="BAC88661"/>
</dbReference>
<dbReference type="KEGG" id="gvi:gll0720"/>
<dbReference type="PATRIC" id="fig|251221.4.peg.733"/>
<dbReference type="eggNOG" id="COG0150">
    <property type="taxonomic scope" value="Bacteria"/>
</dbReference>
<dbReference type="HOGENOM" id="CLU_047116_0_0_3"/>
<dbReference type="InParanoid" id="Q7NMP5"/>
<dbReference type="OrthoDB" id="9802507at2"/>
<dbReference type="PhylomeDB" id="Q7NMP5"/>
<dbReference type="UniPathway" id="UPA00074">
    <property type="reaction ID" value="UER00129"/>
</dbReference>
<dbReference type="Proteomes" id="UP000000557">
    <property type="component" value="Chromosome"/>
</dbReference>
<dbReference type="GO" id="GO:0005829">
    <property type="term" value="C:cytosol"/>
    <property type="evidence" value="ECO:0000318"/>
    <property type="project" value="GO_Central"/>
</dbReference>
<dbReference type="GO" id="GO:0005524">
    <property type="term" value="F:ATP binding"/>
    <property type="evidence" value="ECO:0007669"/>
    <property type="project" value="UniProtKB-KW"/>
</dbReference>
<dbReference type="GO" id="GO:0004637">
    <property type="term" value="F:phosphoribosylamine-glycine ligase activity"/>
    <property type="evidence" value="ECO:0000318"/>
    <property type="project" value="GO_Central"/>
</dbReference>
<dbReference type="GO" id="GO:0004641">
    <property type="term" value="F:phosphoribosylformylglycinamidine cyclo-ligase activity"/>
    <property type="evidence" value="ECO:0000318"/>
    <property type="project" value="GO_Central"/>
</dbReference>
<dbReference type="GO" id="GO:0006189">
    <property type="term" value="P:'de novo' IMP biosynthetic process"/>
    <property type="evidence" value="ECO:0007669"/>
    <property type="project" value="UniProtKB-UniRule"/>
</dbReference>
<dbReference type="GO" id="GO:0046084">
    <property type="term" value="P:adenine biosynthetic process"/>
    <property type="evidence" value="ECO:0000318"/>
    <property type="project" value="GO_Central"/>
</dbReference>
<dbReference type="GO" id="GO:0006164">
    <property type="term" value="P:purine nucleotide biosynthetic process"/>
    <property type="evidence" value="ECO:0000318"/>
    <property type="project" value="GO_Central"/>
</dbReference>
<dbReference type="CDD" id="cd02196">
    <property type="entry name" value="PurM"/>
    <property type="match status" value="1"/>
</dbReference>
<dbReference type="FunFam" id="3.30.1330.10:FF:000001">
    <property type="entry name" value="Phosphoribosylformylglycinamidine cyclo-ligase"/>
    <property type="match status" value="1"/>
</dbReference>
<dbReference type="FunFam" id="3.90.650.10:FF:000011">
    <property type="entry name" value="Phosphoribosylformylglycinamidine cyclo-ligase"/>
    <property type="match status" value="1"/>
</dbReference>
<dbReference type="Gene3D" id="3.90.650.10">
    <property type="entry name" value="PurM-like C-terminal domain"/>
    <property type="match status" value="1"/>
</dbReference>
<dbReference type="Gene3D" id="3.30.1330.10">
    <property type="entry name" value="PurM-like, N-terminal domain"/>
    <property type="match status" value="1"/>
</dbReference>
<dbReference type="HAMAP" id="MF_00741">
    <property type="entry name" value="AIRS"/>
    <property type="match status" value="1"/>
</dbReference>
<dbReference type="InterPro" id="IPR010918">
    <property type="entry name" value="PurM-like_C_dom"/>
</dbReference>
<dbReference type="InterPro" id="IPR036676">
    <property type="entry name" value="PurM-like_C_sf"/>
</dbReference>
<dbReference type="InterPro" id="IPR016188">
    <property type="entry name" value="PurM-like_N"/>
</dbReference>
<dbReference type="InterPro" id="IPR036921">
    <property type="entry name" value="PurM-like_N_sf"/>
</dbReference>
<dbReference type="InterPro" id="IPR004733">
    <property type="entry name" value="PurM_cligase"/>
</dbReference>
<dbReference type="NCBIfam" id="TIGR00878">
    <property type="entry name" value="purM"/>
    <property type="match status" value="1"/>
</dbReference>
<dbReference type="PANTHER" id="PTHR10520:SF12">
    <property type="entry name" value="TRIFUNCTIONAL PURINE BIOSYNTHETIC PROTEIN ADENOSINE-3"/>
    <property type="match status" value="1"/>
</dbReference>
<dbReference type="PANTHER" id="PTHR10520">
    <property type="entry name" value="TRIFUNCTIONAL PURINE BIOSYNTHETIC PROTEIN ADENOSINE-3-RELATED"/>
    <property type="match status" value="1"/>
</dbReference>
<dbReference type="Pfam" id="PF00586">
    <property type="entry name" value="AIRS"/>
    <property type="match status" value="1"/>
</dbReference>
<dbReference type="Pfam" id="PF02769">
    <property type="entry name" value="AIRS_C"/>
    <property type="match status" value="1"/>
</dbReference>
<dbReference type="SUPFAM" id="SSF56042">
    <property type="entry name" value="PurM C-terminal domain-like"/>
    <property type="match status" value="1"/>
</dbReference>
<dbReference type="SUPFAM" id="SSF55326">
    <property type="entry name" value="PurM N-terminal domain-like"/>
    <property type="match status" value="1"/>
</dbReference>
<feature type="chain" id="PRO_0000148214" description="Phosphoribosylformylglycinamidine cyclo-ligase">
    <location>
        <begin position="1"/>
        <end position="337"/>
    </location>
</feature>
<protein>
    <recommendedName>
        <fullName evidence="1">Phosphoribosylformylglycinamidine cyclo-ligase</fullName>
        <ecNumber evidence="1">6.3.3.1</ecNumber>
    </recommendedName>
    <alternativeName>
        <fullName evidence="1">AIR synthase</fullName>
    </alternativeName>
    <alternativeName>
        <fullName evidence="1">AIRS</fullName>
    </alternativeName>
    <alternativeName>
        <fullName evidence="1">Phosphoribosyl-aminoimidazole synthetase</fullName>
    </alternativeName>
</protein>
<sequence length="337" mass="35366">MDYKSAGVDVEAGYEFVARIRGAVERTRRPEQLGGLGGFGGLFALPAGYREPVLVAGTDGVGTKLKLAFALDRHDTIGIDCVAMCVNDVLAQGAEPLFFLDYLATGKLSPAQLAGVVEGIAAGCLEAGCTLLGGETAEMPGFYAAGEYDVAGFCVGIVERSQIIDGNRVQVGDALLGLSSSGVHSNGFSLVRRIVELAGLDWHHRPEDFPASLGEVLLTPTRIYVKPVRAALEAGFDIRGIAHITGGGLIENVPRALGGLGACLERNSWPVPPVFTWLERTGGVGRQDMDQTFNLGLGLVLACPTEQADALQAYLAKQGEQVLRIGAVVEAAGVRFA</sequence>